<evidence type="ECO:0000255" key="1">
    <source>
        <dbReference type="HAMAP-Rule" id="MF_02119"/>
    </source>
</evidence>
<evidence type="ECO:0000255" key="2">
    <source>
        <dbReference type="PROSITE-ProRule" id="PRU01067"/>
    </source>
</evidence>
<evidence type="ECO:0007829" key="3">
    <source>
        <dbReference type="PDB" id="2P5I"/>
    </source>
</evidence>
<feature type="chain" id="PRO_0000410836" description="Octanoyl-[GcvH]:protein N-octanoyltransferase">
    <location>
        <begin position="1"/>
        <end position="278"/>
    </location>
</feature>
<feature type="domain" description="BPL/LPL catalytic" evidence="2">
    <location>
        <begin position="44"/>
        <end position="249"/>
    </location>
</feature>
<feature type="active site" description="Acyl-thioester intermediate" evidence="1">
    <location>
        <position position="148"/>
    </location>
</feature>
<feature type="site" description="Lowers pKa of active site Cys" evidence="1">
    <location>
        <position position="160"/>
    </location>
</feature>
<feature type="strand" evidence="3">
    <location>
        <begin position="14"/>
        <end position="20"/>
    </location>
</feature>
<feature type="helix" evidence="3">
    <location>
        <begin position="27"/>
        <end position="41"/>
    </location>
</feature>
<feature type="turn" evidence="3">
    <location>
        <begin position="42"/>
        <end position="44"/>
    </location>
</feature>
<feature type="strand" evidence="3">
    <location>
        <begin position="49"/>
        <end position="53"/>
    </location>
</feature>
<feature type="strand" evidence="3">
    <location>
        <begin position="56"/>
        <end position="62"/>
    </location>
</feature>
<feature type="helix" evidence="3">
    <location>
        <begin position="63"/>
        <end position="66"/>
    </location>
</feature>
<feature type="helix" evidence="3">
    <location>
        <begin position="71"/>
        <end position="80"/>
    </location>
</feature>
<feature type="strand" evidence="3">
    <location>
        <begin position="84"/>
        <end position="90"/>
    </location>
</feature>
<feature type="strand" evidence="3">
    <location>
        <begin position="95"/>
        <end position="97"/>
    </location>
</feature>
<feature type="strand" evidence="3">
    <location>
        <begin position="101"/>
        <end position="109"/>
    </location>
</feature>
<feature type="helix" evidence="3">
    <location>
        <begin position="116"/>
        <end position="130"/>
    </location>
</feature>
<feature type="strand" evidence="3">
    <location>
        <begin position="146"/>
        <end position="148"/>
    </location>
</feature>
<feature type="strand" evidence="3">
    <location>
        <begin position="154"/>
        <end position="156"/>
    </location>
</feature>
<feature type="strand" evidence="3">
    <location>
        <begin position="159"/>
        <end position="169"/>
    </location>
</feature>
<feature type="strand" evidence="3">
    <location>
        <begin position="172"/>
        <end position="180"/>
    </location>
</feature>
<feature type="helix" evidence="3">
    <location>
        <begin position="185"/>
        <end position="200"/>
    </location>
</feature>
<feature type="helix" evidence="3">
    <location>
        <begin position="214"/>
        <end position="216"/>
    </location>
</feature>
<feature type="helix" evidence="3">
    <location>
        <begin position="220"/>
        <end position="224"/>
    </location>
</feature>
<feature type="helix" evidence="3">
    <location>
        <begin position="230"/>
        <end position="243"/>
    </location>
</feature>
<feature type="helix" evidence="3">
    <location>
        <begin position="255"/>
        <end position="275"/>
    </location>
</feature>
<organism>
    <name type="scientific">Halalkalibacterium halodurans (strain ATCC BAA-125 / DSM 18197 / FERM 7344 / JCM 9153 / C-125)</name>
    <name type="common">Bacillus halodurans</name>
    <dbReference type="NCBI Taxonomy" id="272558"/>
    <lineage>
        <taxon>Bacteria</taxon>
        <taxon>Bacillati</taxon>
        <taxon>Bacillota</taxon>
        <taxon>Bacilli</taxon>
        <taxon>Bacillales</taxon>
        <taxon>Bacillaceae</taxon>
        <taxon>Halalkalibacterium (ex Joshi et al. 2022)</taxon>
    </lineage>
</organism>
<reference key="1">
    <citation type="journal article" date="2000" name="Nucleic Acids Res.">
        <title>Complete genome sequence of the alkaliphilic bacterium Bacillus halodurans and genomic sequence comparison with Bacillus subtilis.</title>
        <authorList>
            <person name="Takami H."/>
            <person name="Nakasone K."/>
            <person name="Takaki Y."/>
            <person name="Maeno G."/>
            <person name="Sasaki R."/>
            <person name="Masui N."/>
            <person name="Fuji F."/>
            <person name="Hirama C."/>
            <person name="Nakamura Y."/>
            <person name="Ogasawara N."/>
            <person name="Kuhara S."/>
            <person name="Horikoshi K."/>
        </authorList>
    </citation>
    <scope>NUCLEOTIDE SEQUENCE [LARGE SCALE GENOMIC DNA]</scope>
    <source>
        <strain>ATCC BAA-125 / DSM 18197 / FERM 7344 / JCM 9153 / C-125</strain>
    </source>
</reference>
<reference key="2">
    <citation type="submission" date="2009-02" db="PDB data bank">
        <title>Crystal structure of a hypothetical protein from Bacillus halodurans: Pfam-PF03099.</title>
        <authorList>
            <consortium name="New York structural genomix research consortium (NYSGXRC)"/>
        </authorList>
    </citation>
    <scope>X-RAY CRYSTALLOGRAPHY (2.21 ANGSTROMS) OF 2-278</scope>
</reference>
<accession>Q9K6A7</accession>
<dbReference type="EC" id="2.3.1.204" evidence="1"/>
<dbReference type="EMBL" id="BA000004">
    <property type="protein sequence ID" value="BAB07541.1"/>
    <property type="molecule type" value="Genomic_DNA"/>
</dbReference>
<dbReference type="PIR" id="F84127">
    <property type="entry name" value="F84127"/>
</dbReference>
<dbReference type="RefSeq" id="WP_010899947.1">
    <property type="nucleotide sequence ID" value="NC_002570.2"/>
</dbReference>
<dbReference type="PDB" id="2P5I">
    <property type="method" value="X-ray"/>
    <property type="resolution" value="2.21 A"/>
    <property type="chains" value="A=2-278"/>
</dbReference>
<dbReference type="PDBsum" id="2P5I"/>
<dbReference type="SMR" id="Q9K6A7"/>
<dbReference type="STRING" id="272558.gene:10729735"/>
<dbReference type="KEGG" id="bha:BH3822"/>
<dbReference type="eggNOG" id="COG0095">
    <property type="taxonomic scope" value="Bacteria"/>
</dbReference>
<dbReference type="HOGENOM" id="CLU_067270_0_0_9"/>
<dbReference type="OrthoDB" id="2080934at2"/>
<dbReference type="EvolutionaryTrace" id="Q9K6A7"/>
<dbReference type="Proteomes" id="UP000001258">
    <property type="component" value="Chromosome"/>
</dbReference>
<dbReference type="GO" id="GO:0033819">
    <property type="term" value="F:lipoyl(octanoyl) transferase activity"/>
    <property type="evidence" value="ECO:0007669"/>
    <property type="project" value="InterPro"/>
</dbReference>
<dbReference type="GO" id="GO:0009107">
    <property type="term" value="P:lipoate biosynthetic process"/>
    <property type="evidence" value="ECO:0007669"/>
    <property type="project" value="UniProtKB-UniRule"/>
</dbReference>
<dbReference type="GO" id="GO:0036211">
    <property type="term" value="P:protein modification process"/>
    <property type="evidence" value="ECO:0007669"/>
    <property type="project" value="InterPro"/>
</dbReference>
<dbReference type="CDD" id="cd16443">
    <property type="entry name" value="LplA"/>
    <property type="match status" value="1"/>
</dbReference>
<dbReference type="Gene3D" id="3.30.930.10">
    <property type="entry name" value="Bira Bifunctional Protein, Domain 2"/>
    <property type="match status" value="1"/>
</dbReference>
<dbReference type="HAMAP" id="MF_02119">
    <property type="entry name" value="LipL"/>
    <property type="match status" value="1"/>
</dbReference>
<dbReference type="InterPro" id="IPR045864">
    <property type="entry name" value="aa-tRNA-synth_II/BPL/LPL"/>
</dbReference>
<dbReference type="InterPro" id="IPR004143">
    <property type="entry name" value="BPL_LPL_catalytic"/>
</dbReference>
<dbReference type="InterPro" id="IPR024897">
    <property type="entry name" value="LipL"/>
</dbReference>
<dbReference type="InterPro" id="IPR050664">
    <property type="entry name" value="Octanoyltrans_LipM/LipL"/>
</dbReference>
<dbReference type="PANTHER" id="PTHR43679:SF2">
    <property type="entry name" value="OCTANOYL-[GCVH]:PROTEIN N-OCTANOYLTRANSFERASE"/>
    <property type="match status" value="1"/>
</dbReference>
<dbReference type="PANTHER" id="PTHR43679">
    <property type="entry name" value="OCTANOYLTRANSFERASE LIPM-RELATED"/>
    <property type="match status" value="1"/>
</dbReference>
<dbReference type="Pfam" id="PF21948">
    <property type="entry name" value="LplA-B_cat"/>
    <property type="match status" value="1"/>
</dbReference>
<dbReference type="SUPFAM" id="SSF55681">
    <property type="entry name" value="Class II aaRS and biotin synthetases"/>
    <property type="match status" value="1"/>
</dbReference>
<dbReference type="PROSITE" id="PS51733">
    <property type="entry name" value="BPL_LPL_CATALYTIC"/>
    <property type="match status" value="1"/>
</dbReference>
<name>LIPL_HALH5</name>
<protein>
    <recommendedName>
        <fullName evidence="1">Octanoyl-[GcvH]:protein N-octanoyltransferase</fullName>
        <ecNumber evidence="1">2.3.1.204</ecNumber>
    </recommendedName>
    <alternativeName>
        <fullName evidence="1">Octanoyl-[GcvH]:E2 amidotransferase</fullName>
    </alternativeName>
</protein>
<comment type="function">
    <text evidence="1">Catalyzes the amidotransfer (transamidation) of the octanoyl moiety from octanoyl-GcvH to the lipoyl domain of the E2 subunit of lipoate-dependent enzymes.</text>
</comment>
<comment type="catalytic activity">
    <reaction evidence="1">
        <text>N(6)-octanoyl-L-lysyl-[glycine-cleavage complex H protein] + L-lysyl-[lipoyl-carrier protein] = N(6)-octanoyl-L-lysyl-[lipoyl-carrier protein] + L-lysyl-[glycine-cleavage complex H protein]</text>
        <dbReference type="Rhea" id="RHEA:20213"/>
        <dbReference type="Rhea" id="RHEA-COMP:10500"/>
        <dbReference type="Rhea" id="RHEA-COMP:10501"/>
        <dbReference type="Rhea" id="RHEA-COMP:10503"/>
        <dbReference type="Rhea" id="RHEA-COMP:10504"/>
        <dbReference type="ChEBI" id="CHEBI:29969"/>
        <dbReference type="ChEBI" id="CHEBI:78809"/>
        <dbReference type="EC" id="2.3.1.204"/>
    </reaction>
</comment>
<comment type="pathway">
    <text evidence="1">Protein modification; protein lipoylation via endogenous pathway; protein N(6)-(lipoyl)lysine from octanoyl-[acyl-carrier-protein].</text>
</comment>
<comment type="miscellaneous">
    <text evidence="1">The reaction proceeds via a thioester-linked acyl-enzyme intermediate.</text>
</comment>
<comment type="similarity">
    <text evidence="1">Belongs to the octanoyltransferase LipL family.</text>
</comment>
<keyword id="KW-0002">3D-structure</keyword>
<keyword id="KW-0012">Acyltransferase</keyword>
<keyword id="KW-1185">Reference proteome</keyword>
<keyword id="KW-0808">Transferase</keyword>
<sequence length="278" mass="31000">MSLLLQQHLSQPWRFLDHTSFGPTFQALQSFAYDDTLCTSIGKSQSPPTLRAWVHHNTVVLGIQDSRLPQIKAGIEALKGFQHDVIVRNSGGLAVVLDSGILNLSLVLKEEKGFSIDDGYELMYELICSMFQDHREQIEAREIVGSYCPGSYDLSIDGKKFAGISQRRIRGGVAVQIYLCVSGSGAERAKMIRTFYDKAVAGQPTKFVYPRIKPETMASLSELLGQPHNVSDVLLKALMTLQQHGASLLTESLSADEWLLYEQHFARISERNEKLLAE</sequence>
<gene>
    <name evidence="1" type="primary">lipL</name>
    <name type="ordered locus">BH3822</name>
</gene>
<proteinExistence type="evidence at protein level"/>